<dbReference type="PIR" id="A32021">
    <property type="entry name" value="A32021"/>
</dbReference>
<dbReference type="SMR" id="P14662"/>
<dbReference type="GO" id="GO:0005576">
    <property type="term" value="C:extracellular region"/>
    <property type="evidence" value="ECO:0007669"/>
    <property type="project" value="UniProtKB-SubCell"/>
</dbReference>
<dbReference type="GO" id="GO:0019731">
    <property type="term" value="P:antibacterial humoral response"/>
    <property type="evidence" value="ECO:0007669"/>
    <property type="project" value="InterPro"/>
</dbReference>
<dbReference type="GO" id="GO:0050830">
    <property type="term" value="P:defense response to Gram-positive bacterium"/>
    <property type="evidence" value="ECO:0007669"/>
    <property type="project" value="UniProtKB-ARBA"/>
</dbReference>
<dbReference type="GO" id="GO:0045087">
    <property type="term" value="P:innate immune response"/>
    <property type="evidence" value="ECO:0007669"/>
    <property type="project" value="UniProtKB-KW"/>
</dbReference>
<dbReference type="InterPro" id="IPR000875">
    <property type="entry name" value="Cecropin"/>
</dbReference>
<dbReference type="Pfam" id="PF00272">
    <property type="entry name" value="Cecropin"/>
    <property type="match status" value="1"/>
</dbReference>
<dbReference type="PROSITE" id="PS00268">
    <property type="entry name" value="CECROPIN"/>
    <property type="match status" value="1"/>
</dbReference>
<accession>P14662</accession>
<name>CEC2_MANSE</name>
<organism>
    <name type="scientific">Manduca sexta</name>
    <name type="common">Tobacco hawkmoth</name>
    <name type="synonym">Tobacco hornworm</name>
    <dbReference type="NCBI Taxonomy" id="7130"/>
    <lineage>
        <taxon>Eukaryota</taxon>
        <taxon>Metazoa</taxon>
        <taxon>Ecdysozoa</taxon>
        <taxon>Arthropoda</taxon>
        <taxon>Hexapoda</taxon>
        <taxon>Insecta</taxon>
        <taxon>Pterygota</taxon>
        <taxon>Neoptera</taxon>
        <taxon>Endopterygota</taxon>
        <taxon>Lepidoptera</taxon>
        <taxon>Glossata</taxon>
        <taxon>Ditrysia</taxon>
        <taxon>Bombycoidea</taxon>
        <taxon>Sphingidae</taxon>
        <taxon>Sphinginae</taxon>
        <taxon>Sphingini</taxon>
        <taxon>Manduca</taxon>
    </lineage>
</organism>
<keyword id="KW-0027">Amidation</keyword>
<keyword id="KW-0044">Antibiotic</keyword>
<keyword id="KW-0929">Antimicrobial</keyword>
<keyword id="KW-0903">Direct protein sequencing</keyword>
<keyword id="KW-0391">Immunity</keyword>
<keyword id="KW-0399">Innate immunity</keyword>
<keyword id="KW-0964">Secreted</keyword>
<proteinExistence type="evidence at protein level"/>
<evidence type="ECO:0000305" key="1"/>
<evidence type="ECO:0000305" key="2">
    <source>
    </source>
</evidence>
<reference key="1">
    <citation type="journal article" date="1988" name="J. Biol. Chem.">
        <title>A family of bacteria-regulated, cecropin D-like peptides from Manduca sexta.</title>
        <authorList>
            <person name="Dickinson L."/>
            <person name="Russel V."/>
            <person name="Dunn P.E."/>
        </authorList>
    </citation>
    <scope>PROTEIN SEQUENCE</scope>
    <scope>AMIDATION AT GLY-37</scope>
</reference>
<comment type="function">
    <text>Cecropins have lytic and antibacterial activity against several Gram-positive and Gram-negative bacteria.</text>
</comment>
<comment type="subcellular location">
    <subcellularLocation>
        <location>Secreted</location>
    </subcellularLocation>
</comment>
<comment type="similarity">
    <text evidence="1">Belongs to the cecropin family.</text>
</comment>
<protein>
    <recommendedName>
        <fullName>Bactericidin B-2</fullName>
    </recommendedName>
    <alternativeName>
        <fullName>Cecropin-like peptide B-2</fullName>
    </alternativeName>
</protein>
<sequence length="37" mass="3848">WNPFKELERAGQRVRDAVISAAPAVATVGQAAAIARG</sequence>
<feature type="peptide" id="PRO_0000044682" description="Bactericidin B-2">
    <location>
        <begin position="1"/>
        <end position="37"/>
    </location>
</feature>
<feature type="modified residue" description="Glycine amide" evidence="2">
    <location>
        <position position="37"/>
    </location>
</feature>